<comment type="function">
    <text evidence="1">Heme chaperone required for the biogenesis of c-type cytochromes. Transiently binds heme delivered by CcmC and transfers the heme to apo-cytochromes in a process facilitated by CcmF and CcmH.</text>
</comment>
<comment type="subcellular location">
    <subcellularLocation>
        <location evidence="1">Cell inner membrane</location>
        <topology evidence="1">Single-pass type II membrane protein</topology>
        <orientation evidence="1">Periplasmic side</orientation>
    </subcellularLocation>
</comment>
<comment type="similarity">
    <text evidence="1">Belongs to the CcmE/CycJ family.</text>
</comment>
<name>CCME_ECODH</name>
<organism>
    <name type="scientific">Escherichia coli (strain K12 / DH10B)</name>
    <dbReference type="NCBI Taxonomy" id="316385"/>
    <lineage>
        <taxon>Bacteria</taxon>
        <taxon>Pseudomonadati</taxon>
        <taxon>Pseudomonadota</taxon>
        <taxon>Gammaproteobacteria</taxon>
        <taxon>Enterobacterales</taxon>
        <taxon>Enterobacteriaceae</taxon>
        <taxon>Escherichia</taxon>
    </lineage>
</organism>
<protein>
    <recommendedName>
        <fullName evidence="1">Cytochrome c-type biogenesis protein CcmE</fullName>
    </recommendedName>
    <alternativeName>
        <fullName evidence="1">Cytochrome c maturation protein E</fullName>
    </alternativeName>
    <alternativeName>
        <fullName evidence="1">Heme chaperone CcmE</fullName>
    </alternativeName>
</protein>
<reference key="1">
    <citation type="journal article" date="2008" name="J. Bacteriol.">
        <title>The complete genome sequence of Escherichia coli DH10B: insights into the biology of a laboratory workhorse.</title>
        <authorList>
            <person name="Durfee T."/>
            <person name="Nelson R."/>
            <person name="Baldwin S."/>
            <person name="Plunkett G. III"/>
            <person name="Burland V."/>
            <person name="Mau B."/>
            <person name="Petrosino J.F."/>
            <person name="Qin X."/>
            <person name="Muzny D.M."/>
            <person name="Ayele M."/>
            <person name="Gibbs R.A."/>
            <person name="Csorgo B."/>
            <person name="Posfai G."/>
            <person name="Weinstock G.M."/>
            <person name="Blattner F.R."/>
        </authorList>
    </citation>
    <scope>NUCLEOTIDE SEQUENCE [LARGE SCALE GENOMIC DNA]</scope>
    <source>
        <strain>K12 / DH10B</strain>
    </source>
</reference>
<keyword id="KW-0997">Cell inner membrane</keyword>
<keyword id="KW-1003">Cell membrane</keyword>
<keyword id="KW-0201">Cytochrome c-type biogenesis</keyword>
<keyword id="KW-0349">Heme</keyword>
<keyword id="KW-0408">Iron</keyword>
<keyword id="KW-0472">Membrane</keyword>
<keyword id="KW-0479">Metal-binding</keyword>
<keyword id="KW-0735">Signal-anchor</keyword>
<keyword id="KW-0812">Transmembrane</keyword>
<keyword id="KW-1133">Transmembrane helix</keyword>
<proteinExistence type="inferred from homology"/>
<sequence length="159" mass="17698">MNIRRKNRLWIACAVLAGLALTIGLVLYALRSNIDLFYTPGEILYGKRETQQMPEVGQRLRVGGMVMPGSVQRDPNSLKVTFTIYDAEGSVDVSYEGILPDLFREGQGVVVQGELEKGNHILAKEVLAKHDENYTPPEVEKAMEANHRRPASVYKDPAS</sequence>
<feature type="chain" id="PRO_1000189019" description="Cytochrome c-type biogenesis protein CcmE">
    <location>
        <begin position="1"/>
        <end position="159"/>
    </location>
</feature>
<feature type="topological domain" description="Cytoplasmic" evidence="1">
    <location>
        <begin position="1"/>
        <end position="8"/>
    </location>
</feature>
<feature type="transmembrane region" description="Helical; Signal-anchor for type II membrane protein" evidence="1">
    <location>
        <begin position="9"/>
        <end position="29"/>
    </location>
</feature>
<feature type="topological domain" description="Periplasmic" evidence="1">
    <location>
        <begin position="30"/>
        <end position="159"/>
    </location>
</feature>
<feature type="region of interest" description="Disordered" evidence="2">
    <location>
        <begin position="132"/>
        <end position="159"/>
    </location>
</feature>
<feature type="compositionally biased region" description="Basic and acidic residues" evidence="2">
    <location>
        <begin position="132"/>
        <end position="147"/>
    </location>
</feature>
<feature type="binding site" description="covalent" evidence="1">
    <location>
        <position position="130"/>
    </location>
    <ligand>
        <name>heme</name>
        <dbReference type="ChEBI" id="CHEBI:30413"/>
    </ligand>
</feature>
<feature type="binding site" description="axial binding residue" evidence="1">
    <location>
        <position position="134"/>
    </location>
    <ligand>
        <name>heme</name>
        <dbReference type="ChEBI" id="CHEBI:30413"/>
    </ligand>
    <ligandPart>
        <name>Fe</name>
        <dbReference type="ChEBI" id="CHEBI:18248"/>
    </ligandPart>
</feature>
<accession>B1X893</accession>
<evidence type="ECO:0000255" key="1">
    <source>
        <dbReference type="HAMAP-Rule" id="MF_01959"/>
    </source>
</evidence>
<evidence type="ECO:0000256" key="2">
    <source>
        <dbReference type="SAM" id="MobiDB-lite"/>
    </source>
</evidence>
<gene>
    <name evidence="1" type="primary">ccmE</name>
    <name evidence="1" type="synonym">cycJ</name>
    <name type="ordered locus">ECDH10B_2354</name>
</gene>
<dbReference type="EMBL" id="CP000948">
    <property type="protein sequence ID" value="ACB03359.1"/>
    <property type="molecule type" value="Genomic_DNA"/>
</dbReference>
<dbReference type="RefSeq" id="WP_001026418.1">
    <property type="nucleotide sequence ID" value="NC_010473.1"/>
</dbReference>
<dbReference type="SMR" id="B1X893"/>
<dbReference type="GeneID" id="86860369"/>
<dbReference type="KEGG" id="ecd:ECDH10B_2354"/>
<dbReference type="HOGENOM" id="CLU_079503_1_0_6"/>
<dbReference type="GO" id="GO:0005886">
    <property type="term" value="C:plasma membrane"/>
    <property type="evidence" value="ECO:0007669"/>
    <property type="project" value="UniProtKB-SubCell"/>
</dbReference>
<dbReference type="GO" id="GO:0020037">
    <property type="term" value="F:heme binding"/>
    <property type="evidence" value="ECO:0007669"/>
    <property type="project" value="InterPro"/>
</dbReference>
<dbReference type="GO" id="GO:0046872">
    <property type="term" value="F:metal ion binding"/>
    <property type="evidence" value="ECO:0007669"/>
    <property type="project" value="UniProtKB-KW"/>
</dbReference>
<dbReference type="GO" id="GO:0017004">
    <property type="term" value="P:cytochrome complex assembly"/>
    <property type="evidence" value="ECO:0007669"/>
    <property type="project" value="UniProtKB-KW"/>
</dbReference>
<dbReference type="FunFam" id="2.40.50.140:FF:000104">
    <property type="entry name" value="Cytochrome c-type biogenesis protein CcmE"/>
    <property type="match status" value="1"/>
</dbReference>
<dbReference type="Gene3D" id="2.40.50.140">
    <property type="entry name" value="Nucleic acid-binding proteins"/>
    <property type="match status" value="1"/>
</dbReference>
<dbReference type="HAMAP" id="MF_01959">
    <property type="entry name" value="CcmE"/>
    <property type="match status" value="1"/>
</dbReference>
<dbReference type="InterPro" id="IPR004329">
    <property type="entry name" value="CcmE"/>
</dbReference>
<dbReference type="InterPro" id="IPR036127">
    <property type="entry name" value="CcmE-like_sf"/>
</dbReference>
<dbReference type="InterPro" id="IPR012340">
    <property type="entry name" value="NA-bd_OB-fold"/>
</dbReference>
<dbReference type="NCBIfam" id="NF009635">
    <property type="entry name" value="PRK13150.1"/>
    <property type="match status" value="1"/>
</dbReference>
<dbReference type="NCBIfam" id="NF009638">
    <property type="entry name" value="PRK13165.1"/>
    <property type="match status" value="1"/>
</dbReference>
<dbReference type="NCBIfam" id="NF009727">
    <property type="entry name" value="PRK13254.1-1"/>
    <property type="match status" value="1"/>
</dbReference>
<dbReference type="NCBIfam" id="NF009729">
    <property type="entry name" value="PRK13254.1-3"/>
    <property type="match status" value="1"/>
</dbReference>
<dbReference type="PANTHER" id="PTHR34128">
    <property type="entry name" value="CYTOCHROME C-TYPE BIOGENESIS PROTEIN CCME HOMOLOG, MITOCHONDRIAL"/>
    <property type="match status" value="1"/>
</dbReference>
<dbReference type="PANTHER" id="PTHR34128:SF2">
    <property type="entry name" value="CYTOCHROME C-TYPE BIOGENESIS PROTEIN CCME HOMOLOG, MITOCHONDRIAL"/>
    <property type="match status" value="1"/>
</dbReference>
<dbReference type="Pfam" id="PF03100">
    <property type="entry name" value="CcmE"/>
    <property type="match status" value="1"/>
</dbReference>
<dbReference type="SUPFAM" id="SSF82093">
    <property type="entry name" value="Heme chaperone CcmE"/>
    <property type="match status" value="1"/>
</dbReference>